<sequence>MLKNNINDSKNLDRTFSIAPMLDWTDRHYRYFARLMSANALLYTEMVTTGAILHGRGDYLTYNQEEHPLALQLGGSNPVELARCAKLAAERGYDEVNLNVGCPSDRVQNGRFGACLMAEPELVAECVDAMKQVVDIPVTVKTRIGIDEQDSYEFLTHFIDTVMAKGCGEFIIHARKAWLQGLSPKENREIPPLDYDRVYQLKRDYPALNISINGGITSLEQAQTHLQHLDGVMVGREAYQNPYMLAQVDQVLCGSTKAVMSREAVIEAMLPYIEAHLQVGGRLNHITRHMIGLFQGLPGARAWRRYLSENAHKNGAGIEVVKLAYQSVQTDLVAQ</sequence>
<proteinExistence type="inferred from homology"/>
<reference key="1">
    <citation type="journal article" date="2002" name="Nat. Biotechnol.">
        <title>Genome sequence of the dissimilatory metal ion-reducing bacterium Shewanella oneidensis.</title>
        <authorList>
            <person name="Heidelberg J.F."/>
            <person name="Paulsen I.T."/>
            <person name="Nelson K.E."/>
            <person name="Gaidos E.J."/>
            <person name="Nelson W.C."/>
            <person name="Read T.D."/>
            <person name="Eisen J.A."/>
            <person name="Seshadri R."/>
            <person name="Ward N.L."/>
            <person name="Methe B.A."/>
            <person name="Clayton R.A."/>
            <person name="Meyer T."/>
            <person name="Tsapin A."/>
            <person name="Scott J."/>
            <person name="Beanan M.J."/>
            <person name="Brinkac L.M."/>
            <person name="Daugherty S.C."/>
            <person name="DeBoy R.T."/>
            <person name="Dodson R.J."/>
            <person name="Durkin A.S."/>
            <person name="Haft D.H."/>
            <person name="Kolonay J.F."/>
            <person name="Madupu R."/>
            <person name="Peterson J.D."/>
            <person name="Umayam L.A."/>
            <person name="White O."/>
            <person name="Wolf A.M."/>
            <person name="Vamathevan J.J."/>
            <person name="Weidman J.F."/>
            <person name="Impraim M."/>
            <person name="Lee K."/>
            <person name="Berry K.J."/>
            <person name="Lee C."/>
            <person name="Mueller J."/>
            <person name="Khouri H.M."/>
            <person name="Gill J."/>
            <person name="Utterback T.R."/>
            <person name="McDonald L.A."/>
            <person name="Feldblyum T.V."/>
            <person name="Smith H.O."/>
            <person name="Venter J.C."/>
            <person name="Nealson K.H."/>
            <person name="Fraser C.M."/>
        </authorList>
    </citation>
    <scope>NUCLEOTIDE SEQUENCE [LARGE SCALE GENOMIC DNA]</scope>
    <source>
        <strain>ATCC 700550 / JCM 31522 / CIP 106686 / LMG 19005 / NCIMB 14063 / MR-1</strain>
    </source>
</reference>
<accession>Q8EAJ0</accession>
<evidence type="ECO:0000255" key="1">
    <source>
        <dbReference type="HAMAP-Rule" id="MF_02041"/>
    </source>
</evidence>
<dbReference type="EC" id="1.3.1.-" evidence="1"/>
<dbReference type="EC" id="1.3.1.91" evidence="1"/>
<dbReference type="EMBL" id="AE014299">
    <property type="protein sequence ID" value="AAN56887.1"/>
    <property type="molecule type" value="Genomic_DNA"/>
</dbReference>
<dbReference type="RefSeq" id="NP_719443.1">
    <property type="nucleotide sequence ID" value="NC_004347.2"/>
</dbReference>
<dbReference type="RefSeq" id="WP_011073658.1">
    <property type="nucleotide sequence ID" value="NC_004347.2"/>
</dbReference>
<dbReference type="SMR" id="Q8EAJ0"/>
<dbReference type="STRING" id="211586.SO_3912"/>
<dbReference type="PaxDb" id="211586-SO_3912"/>
<dbReference type="KEGG" id="son:SO_3912"/>
<dbReference type="PATRIC" id="fig|211586.12.peg.3796"/>
<dbReference type="eggNOG" id="COG0042">
    <property type="taxonomic scope" value="Bacteria"/>
</dbReference>
<dbReference type="HOGENOM" id="CLU_013299_2_1_6"/>
<dbReference type="OrthoDB" id="9783413at2"/>
<dbReference type="PhylomeDB" id="Q8EAJ0"/>
<dbReference type="BioCyc" id="SONE211586:G1GMP-3631-MONOMER"/>
<dbReference type="Proteomes" id="UP000008186">
    <property type="component" value="Chromosome"/>
</dbReference>
<dbReference type="GO" id="GO:0050660">
    <property type="term" value="F:flavin adenine dinucleotide binding"/>
    <property type="evidence" value="ECO:0007669"/>
    <property type="project" value="InterPro"/>
</dbReference>
<dbReference type="GO" id="GO:0010181">
    <property type="term" value="F:FMN binding"/>
    <property type="evidence" value="ECO:0007669"/>
    <property type="project" value="UniProtKB-UniRule"/>
</dbReference>
<dbReference type="GO" id="GO:0000049">
    <property type="term" value="F:tRNA binding"/>
    <property type="evidence" value="ECO:0007669"/>
    <property type="project" value="UniProtKB-UniRule"/>
</dbReference>
<dbReference type="GO" id="GO:0102264">
    <property type="term" value="F:tRNA-dihydrouridine20 synthase activity"/>
    <property type="evidence" value="ECO:0007669"/>
    <property type="project" value="UniProtKB-EC"/>
</dbReference>
<dbReference type="GO" id="GO:0102266">
    <property type="term" value="F:tRNA-dihydrouridine20a synthase activity"/>
    <property type="evidence" value="ECO:0007669"/>
    <property type="project" value="RHEA"/>
</dbReference>
<dbReference type="CDD" id="cd02801">
    <property type="entry name" value="DUS_like_FMN"/>
    <property type="match status" value="1"/>
</dbReference>
<dbReference type="FunFam" id="3.20.20.70:FF:000083">
    <property type="entry name" value="tRNA-dihydrouridine(20/20a) synthase"/>
    <property type="match status" value="1"/>
</dbReference>
<dbReference type="Gene3D" id="1.20.120.1460">
    <property type="match status" value="1"/>
</dbReference>
<dbReference type="Gene3D" id="3.20.20.70">
    <property type="entry name" value="Aldolase class I"/>
    <property type="match status" value="1"/>
</dbReference>
<dbReference type="HAMAP" id="MF_02041">
    <property type="entry name" value="DusA_subfam"/>
    <property type="match status" value="1"/>
</dbReference>
<dbReference type="InterPro" id="IPR013785">
    <property type="entry name" value="Aldolase_TIM"/>
</dbReference>
<dbReference type="InterPro" id="IPR035587">
    <property type="entry name" value="DUS-like_FMN-bd"/>
</dbReference>
<dbReference type="InterPro" id="IPR001269">
    <property type="entry name" value="DUS_fam"/>
</dbReference>
<dbReference type="InterPro" id="IPR004653">
    <property type="entry name" value="DusA"/>
</dbReference>
<dbReference type="InterPro" id="IPR018517">
    <property type="entry name" value="tRNA_hU_synthase_CS"/>
</dbReference>
<dbReference type="NCBIfam" id="NF008774">
    <property type="entry name" value="PRK11815.1"/>
    <property type="match status" value="1"/>
</dbReference>
<dbReference type="NCBIfam" id="TIGR00742">
    <property type="entry name" value="yjbN"/>
    <property type="match status" value="1"/>
</dbReference>
<dbReference type="PANTHER" id="PTHR42907">
    <property type="entry name" value="FMN-LINKED OXIDOREDUCTASES SUPERFAMILY PROTEIN"/>
    <property type="match status" value="1"/>
</dbReference>
<dbReference type="PANTHER" id="PTHR42907:SF1">
    <property type="entry name" value="FMN-LINKED OXIDOREDUCTASES SUPERFAMILY PROTEIN"/>
    <property type="match status" value="1"/>
</dbReference>
<dbReference type="Pfam" id="PF01207">
    <property type="entry name" value="Dus"/>
    <property type="match status" value="1"/>
</dbReference>
<dbReference type="PIRSF" id="PIRSF006621">
    <property type="entry name" value="Dus"/>
    <property type="match status" value="1"/>
</dbReference>
<dbReference type="SUPFAM" id="SSF51395">
    <property type="entry name" value="FMN-linked oxidoreductases"/>
    <property type="match status" value="1"/>
</dbReference>
<dbReference type="PROSITE" id="PS01136">
    <property type="entry name" value="UPF0034"/>
    <property type="match status" value="1"/>
</dbReference>
<comment type="function">
    <text evidence="1">Catalyzes the synthesis of 5,6-dihydrouridine (D), a modified base found in the D-loop of most tRNAs, via the reduction of the C5-C6 double bond in target uridines. Specifically modifies U20 and U20a in tRNAs.</text>
</comment>
<comment type="catalytic activity">
    <reaction evidence="1">
        <text>5,6-dihydrouridine(20) in tRNA + NADP(+) = uridine(20) in tRNA + NADPH + H(+)</text>
        <dbReference type="Rhea" id="RHEA:53336"/>
        <dbReference type="Rhea" id="RHEA-COMP:13533"/>
        <dbReference type="Rhea" id="RHEA-COMP:13534"/>
        <dbReference type="ChEBI" id="CHEBI:15378"/>
        <dbReference type="ChEBI" id="CHEBI:57783"/>
        <dbReference type="ChEBI" id="CHEBI:58349"/>
        <dbReference type="ChEBI" id="CHEBI:65315"/>
        <dbReference type="ChEBI" id="CHEBI:74443"/>
        <dbReference type="EC" id="1.3.1.91"/>
    </reaction>
</comment>
<comment type="catalytic activity">
    <reaction evidence="1">
        <text>5,6-dihydrouridine(20) in tRNA + NAD(+) = uridine(20) in tRNA + NADH + H(+)</text>
        <dbReference type="Rhea" id="RHEA:53340"/>
        <dbReference type="Rhea" id="RHEA-COMP:13533"/>
        <dbReference type="Rhea" id="RHEA-COMP:13534"/>
        <dbReference type="ChEBI" id="CHEBI:15378"/>
        <dbReference type="ChEBI" id="CHEBI:57540"/>
        <dbReference type="ChEBI" id="CHEBI:57945"/>
        <dbReference type="ChEBI" id="CHEBI:65315"/>
        <dbReference type="ChEBI" id="CHEBI:74443"/>
        <dbReference type="EC" id="1.3.1.91"/>
    </reaction>
</comment>
<comment type="catalytic activity">
    <reaction evidence="1">
        <text>5,6-dihydrouridine(20a) in tRNA + NADP(+) = uridine(20a) in tRNA + NADPH + H(+)</text>
        <dbReference type="Rhea" id="RHEA:53344"/>
        <dbReference type="Rhea" id="RHEA-COMP:13535"/>
        <dbReference type="Rhea" id="RHEA-COMP:13536"/>
        <dbReference type="ChEBI" id="CHEBI:15378"/>
        <dbReference type="ChEBI" id="CHEBI:57783"/>
        <dbReference type="ChEBI" id="CHEBI:58349"/>
        <dbReference type="ChEBI" id="CHEBI:65315"/>
        <dbReference type="ChEBI" id="CHEBI:74443"/>
    </reaction>
</comment>
<comment type="catalytic activity">
    <reaction evidence="1">
        <text>5,6-dihydrouridine(20a) in tRNA + NAD(+) = uridine(20a) in tRNA + NADH + H(+)</text>
        <dbReference type="Rhea" id="RHEA:53348"/>
        <dbReference type="Rhea" id="RHEA-COMP:13535"/>
        <dbReference type="Rhea" id="RHEA-COMP:13536"/>
        <dbReference type="ChEBI" id="CHEBI:15378"/>
        <dbReference type="ChEBI" id="CHEBI:57540"/>
        <dbReference type="ChEBI" id="CHEBI:57945"/>
        <dbReference type="ChEBI" id="CHEBI:65315"/>
        <dbReference type="ChEBI" id="CHEBI:74443"/>
    </reaction>
</comment>
<comment type="cofactor">
    <cofactor evidence="1">
        <name>FMN</name>
        <dbReference type="ChEBI" id="CHEBI:58210"/>
    </cofactor>
</comment>
<comment type="similarity">
    <text evidence="1">Belongs to the Dus family. DusA subfamily.</text>
</comment>
<name>DUSA_SHEON</name>
<feature type="chain" id="PRO_0000162074" description="tRNA-dihydrouridine(20/20a) synthase">
    <location>
        <begin position="1"/>
        <end position="335"/>
    </location>
</feature>
<feature type="active site" description="Proton donor" evidence="1">
    <location>
        <position position="102"/>
    </location>
</feature>
<feature type="binding site" evidence="1">
    <location>
        <begin position="20"/>
        <end position="22"/>
    </location>
    <ligand>
        <name>FMN</name>
        <dbReference type="ChEBI" id="CHEBI:58210"/>
    </ligand>
</feature>
<feature type="binding site" evidence="1">
    <location>
        <position position="72"/>
    </location>
    <ligand>
        <name>FMN</name>
        <dbReference type="ChEBI" id="CHEBI:58210"/>
    </ligand>
</feature>
<feature type="binding site" evidence="1">
    <location>
        <position position="141"/>
    </location>
    <ligand>
        <name>FMN</name>
        <dbReference type="ChEBI" id="CHEBI:58210"/>
    </ligand>
</feature>
<feature type="binding site" evidence="1">
    <location>
        <position position="173"/>
    </location>
    <ligand>
        <name>FMN</name>
        <dbReference type="ChEBI" id="CHEBI:58210"/>
    </ligand>
</feature>
<feature type="binding site" evidence="1">
    <location>
        <begin position="213"/>
        <end position="215"/>
    </location>
    <ligand>
        <name>FMN</name>
        <dbReference type="ChEBI" id="CHEBI:58210"/>
    </ligand>
</feature>
<feature type="binding site" evidence="1">
    <location>
        <begin position="235"/>
        <end position="236"/>
    </location>
    <ligand>
        <name>FMN</name>
        <dbReference type="ChEBI" id="CHEBI:58210"/>
    </ligand>
</feature>
<feature type="site" description="Interacts with tRNA" evidence="1">
    <location>
        <position position="99"/>
    </location>
</feature>
<feature type="site" description="Interacts with tRNA; defines subfamily-specific binding signature" evidence="1">
    <location>
        <position position="185"/>
    </location>
</feature>
<feature type="site" description="Interacts with tRNA" evidence="1">
    <location>
        <position position="188"/>
    </location>
</feature>
<feature type="site" description="Interacts with tRNA; defines subfamily-specific binding signature" evidence="1">
    <location>
        <position position="301"/>
    </location>
</feature>
<feature type="site" description="Interacts with tRNA; defines subfamily-specific binding signature" evidence="1">
    <location>
        <position position="304"/>
    </location>
</feature>
<protein>
    <recommendedName>
        <fullName evidence="1">tRNA-dihydrouridine(20/20a) synthase</fullName>
        <ecNumber evidence="1">1.3.1.-</ecNumber>
        <ecNumber evidence="1">1.3.1.91</ecNumber>
    </recommendedName>
    <alternativeName>
        <fullName evidence="1">U20-specific dihydrouridine synthase</fullName>
        <shortName evidence="1">U20-specific Dus</shortName>
    </alternativeName>
    <alternativeName>
        <fullName evidence="1">tRNA-dihydrouridine synthase A</fullName>
    </alternativeName>
</protein>
<gene>
    <name evidence="1" type="primary">dusA</name>
    <name type="ordered locus">SO_3912</name>
</gene>
<keyword id="KW-0285">Flavoprotein</keyword>
<keyword id="KW-0288">FMN</keyword>
<keyword id="KW-0521">NADP</keyword>
<keyword id="KW-0560">Oxidoreductase</keyword>
<keyword id="KW-1185">Reference proteome</keyword>
<keyword id="KW-0694">RNA-binding</keyword>
<keyword id="KW-0819">tRNA processing</keyword>
<keyword id="KW-0820">tRNA-binding</keyword>
<organism>
    <name type="scientific">Shewanella oneidensis (strain ATCC 700550 / JCM 31522 / CIP 106686 / LMG 19005 / NCIMB 14063 / MR-1)</name>
    <dbReference type="NCBI Taxonomy" id="211586"/>
    <lineage>
        <taxon>Bacteria</taxon>
        <taxon>Pseudomonadati</taxon>
        <taxon>Pseudomonadota</taxon>
        <taxon>Gammaproteobacteria</taxon>
        <taxon>Alteromonadales</taxon>
        <taxon>Shewanellaceae</taxon>
        <taxon>Shewanella</taxon>
    </lineage>
</organism>